<feature type="chain" id="PRO_1000144655" description="Large ribosomal subunit protein uL30">
    <location>
        <begin position="1"/>
        <end position="60"/>
    </location>
</feature>
<sequence>MSEKTVKVQLVKSLIGTRESHRATVRGLGLRRLNSVSELQDTPAVRGMINKVSYLVKVIA</sequence>
<organism>
    <name type="scientific">Burkholderia ambifaria (strain MC40-6)</name>
    <dbReference type="NCBI Taxonomy" id="398577"/>
    <lineage>
        <taxon>Bacteria</taxon>
        <taxon>Pseudomonadati</taxon>
        <taxon>Pseudomonadota</taxon>
        <taxon>Betaproteobacteria</taxon>
        <taxon>Burkholderiales</taxon>
        <taxon>Burkholderiaceae</taxon>
        <taxon>Burkholderia</taxon>
        <taxon>Burkholderia cepacia complex</taxon>
    </lineage>
</organism>
<accession>B1YRP7</accession>
<gene>
    <name evidence="1" type="primary">rpmD</name>
    <name type="ordered locus">BamMC406_0294</name>
</gene>
<comment type="subunit">
    <text evidence="1">Part of the 50S ribosomal subunit.</text>
</comment>
<comment type="similarity">
    <text evidence="1">Belongs to the universal ribosomal protein uL30 family.</text>
</comment>
<protein>
    <recommendedName>
        <fullName evidence="1">Large ribosomal subunit protein uL30</fullName>
    </recommendedName>
    <alternativeName>
        <fullName evidence="2">50S ribosomal protein L30</fullName>
    </alternativeName>
</protein>
<evidence type="ECO:0000255" key="1">
    <source>
        <dbReference type="HAMAP-Rule" id="MF_01371"/>
    </source>
</evidence>
<evidence type="ECO:0000305" key="2"/>
<proteinExistence type="inferred from homology"/>
<name>RL30_BURA4</name>
<reference key="1">
    <citation type="submission" date="2008-04" db="EMBL/GenBank/DDBJ databases">
        <title>Complete sequence of chromosome 1 of Burkholderia ambifaria MC40-6.</title>
        <authorList>
            <person name="Copeland A."/>
            <person name="Lucas S."/>
            <person name="Lapidus A."/>
            <person name="Glavina del Rio T."/>
            <person name="Dalin E."/>
            <person name="Tice H."/>
            <person name="Pitluck S."/>
            <person name="Chain P."/>
            <person name="Malfatti S."/>
            <person name="Shin M."/>
            <person name="Vergez L."/>
            <person name="Lang D."/>
            <person name="Schmutz J."/>
            <person name="Larimer F."/>
            <person name="Land M."/>
            <person name="Hauser L."/>
            <person name="Kyrpides N."/>
            <person name="Lykidis A."/>
            <person name="Ramette A."/>
            <person name="Konstantinidis K."/>
            <person name="Tiedje J."/>
            <person name="Richardson P."/>
        </authorList>
    </citation>
    <scope>NUCLEOTIDE SEQUENCE [LARGE SCALE GENOMIC DNA]</scope>
    <source>
        <strain>MC40-6</strain>
    </source>
</reference>
<keyword id="KW-0687">Ribonucleoprotein</keyword>
<keyword id="KW-0689">Ribosomal protein</keyword>
<dbReference type="EMBL" id="CP001025">
    <property type="protein sequence ID" value="ACB62795.1"/>
    <property type="molecule type" value="Genomic_DNA"/>
</dbReference>
<dbReference type="RefSeq" id="WP_006400644.1">
    <property type="nucleotide sequence ID" value="NC_010551.1"/>
</dbReference>
<dbReference type="SMR" id="B1YRP7"/>
<dbReference type="GeneID" id="98107142"/>
<dbReference type="KEGG" id="bac:BamMC406_0294"/>
<dbReference type="HOGENOM" id="CLU_131047_1_4_4"/>
<dbReference type="OrthoDB" id="9812790at2"/>
<dbReference type="Proteomes" id="UP000001680">
    <property type="component" value="Chromosome 1"/>
</dbReference>
<dbReference type="GO" id="GO:0022625">
    <property type="term" value="C:cytosolic large ribosomal subunit"/>
    <property type="evidence" value="ECO:0007669"/>
    <property type="project" value="TreeGrafter"/>
</dbReference>
<dbReference type="GO" id="GO:0003735">
    <property type="term" value="F:structural constituent of ribosome"/>
    <property type="evidence" value="ECO:0007669"/>
    <property type="project" value="InterPro"/>
</dbReference>
<dbReference type="GO" id="GO:0006412">
    <property type="term" value="P:translation"/>
    <property type="evidence" value="ECO:0007669"/>
    <property type="project" value="UniProtKB-UniRule"/>
</dbReference>
<dbReference type="CDD" id="cd01658">
    <property type="entry name" value="Ribosomal_L30"/>
    <property type="match status" value="1"/>
</dbReference>
<dbReference type="FunFam" id="3.30.1390.20:FF:000001">
    <property type="entry name" value="50S ribosomal protein L30"/>
    <property type="match status" value="1"/>
</dbReference>
<dbReference type="Gene3D" id="3.30.1390.20">
    <property type="entry name" value="Ribosomal protein L30, ferredoxin-like fold domain"/>
    <property type="match status" value="1"/>
</dbReference>
<dbReference type="HAMAP" id="MF_01371_B">
    <property type="entry name" value="Ribosomal_uL30_B"/>
    <property type="match status" value="1"/>
</dbReference>
<dbReference type="InterPro" id="IPR036919">
    <property type="entry name" value="Ribo_uL30_ferredoxin-like_sf"/>
</dbReference>
<dbReference type="InterPro" id="IPR005996">
    <property type="entry name" value="Ribosomal_uL30_bac-type"/>
</dbReference>
<dbReference type="InterPro" id="IPR016082">
    <property type="entry name" value="Ribosomal_uL30_ferredoxin-like"/>
</dbReference>
<dbReference type="NCBIfam" id="TIGR01308">
    <property type="entry name" value="rpmD_bact"/>
    <property type="match status" value="1"/>
</dbReference>
<dbReference type="PANTHER" id="PTHR15892:SF2">
    <property type="entry name" value="LARGE RIBOSOMAL SUBUNIT PROTEIN UL30M"/>
    <property type="match status" value="1"/>
</dbReference>
<dbReference type="PANTHER" id="PTHR15892">
    <property type="entry name" value="MITOCHONDRIAL RIBOSOMAL PROTEIN L30"/>
    <property type="match status" value="1"/>
</dbReference>
<dbReference type="Pfam" id="PF00327">
    <property type="entry name" value="Ribosomal_L30"/>
    <property type="match status" value="1"/>
</dbReference>
<dbReference type="PIRSF" id="PIRSF002211">
    <property type="entry name" value="Ribosomal_L30_bac-type"/>
    <property type="match status" value="1"/>
</dbReference>
<dbReference type="SUPFAM" id="SSF55129">
    <property type="entry name" value="Ribosomal protein L30p/L7e"/>
    <property type="match status" value="1"/>
</dbReference>